<organism>
    <name type="scientific">Pyrococcus abyssi (strain GE5 / Orsay)</name>
    <dbReference type="NCBI Taxonomy" id="272844"/>
    <lineage>
        <taxon>Archaea</taxon>
        <taxon>Methanobacteriati</taxon>
        <taxon>Methanobacteriota</taxon>
        <taxon>Thermococci</taxon>
        <taxon>Thermococcales</taxon>
        <taxon>Thermococcaceae</taxon>
        <taxon>Pyrococcus</taxon>
    </lineage>
</organism>
<accession>Q9V2F9</accession>
<accession>G8ZFV0</accession>
<gene>
    <name evidence="1" type="primary">fau-1</name>
    <name type="ordered locus">PYRAB01150</name>
    <name type="ORF">PAB0071</name>
</gene>
<reference key="1">
    <citation type="journal article" date="2003" name="Mol. Microbiol.">
        <title>An integrated analysis of the genome of the hyperthermophilic archaeon Pyrococcus abyssi.</title>
        <authorList>
            <person name="Cohen G.N."/>
            <person name="Barbe V."/>
            <person name="Flament D."/>
            <person name="Galperin M."/>
            <person name="Heilig R."/>
            <person name="Lecompte O."/>
            <person name="Poch O."/>
            <person name="Prieur D."/>
            <person name="Querellou J."/>
            <person name="Ripp R."/>
            <person name="Thierry J.-C."/>
            <person name="Van der Oost J."/>
            <person name="Weissenbach J."/>
            <person name="Zivanovic Y."/>
            <person name="Forterre P."/>
        </authorList>
    </citation>
    <scope>NUCLEOTIDE SEQUENCE [LARGE SCALE GENOMIC DNA]</scope>
    <source>
        <strain>GE5 / Orsay</strain>
    </source>
</reference>
<reference key="2">
    <citation type="journal article" date="2012" name="Curr. Microbiol.">
        <title>Re-annotation of two hyperthermophilic archaea Pyrococcus abyssi GE5 and Pyrococcus furiosus DSM 3638.</title>
        <authorList>
            <person name="Gao J."/>
            <person name="Wang J."/>
        </authorList>
    </citation>
    <scope>GENOME REANNOTATION</scope>
    <source>
        <strain>GE5 / Orsay</strain>
    </source>
</reference>
<name>FAU1_PYRAB</name>
<sequence>MSTESEISVRIRGIYSTALTKLFLDKGFKIVQPSDVIAERLGIEKSYEDFDVDIYDRNHGITIVGTKVEEVRKALEEELVDVFFRKLPYKLYGVYKGIVVKRDDRYVYVDIGNAIGTVLVEELPDAVEGDEVVVQVKKHNVLPHLSIMITIPGDYAVLIPKPIGVQRHVKISRKIRDPEERERLRILGLSVNLGEWGILWRTAAAYKEWSLLRDELVRLSKIADKLKEADKYSAPAEIIEGRSIYEVEFGGGAKKKLDEIRNRVVPTIEGHHQYKSYDPEFTLAVEVAEGILAKMPSQRQKISEGFVEAITNSKGPRVGWIFTLNHVKPDGQVIKIGPGEVIEVSSRPLRVKIRRNLRPGRVYDGLEVPIEPGDYAITEIEAGKWWFVHRYYDRNGNLKGEFYNINTPVEIYPDKARYVDLEVDIVKWPDGKKEIIDKEKLKEHYEDGIISEKLYKAVLRIVQEVYERV</sequence>
<protein>
    <recommendedName>
        <fullName evidence="1">Probable ribonuclease FAU-1</fullName>
        <ecNumber evidence="1">3.1.26.-</ecNumber>
    </recommendedName>
    <alternativeName>
        <fullName evidence="1">RNA-binding protein FAU-1</fullName>
    </alternativeName>
</protein>
<proteinExistence type="inferred from homology"/>
<dbReference type="EC" id="3.1.26.-" evidence="1"/>
<dbReference type="EMBL" id="AJ248283">
    <property type="protein sequence ID" value="CAB49039.1"/>
    <property type="status" value="ALT_INIT"/>
    <property type="molecule type" value="Genomic_DNA"/>
</dbReference>
<dbReference type="EMBL" id="HE613800">
    <property type="protein sequence ID" value="CCE69491.1"/>
    <property type="molecule type" value="Genomic_DNA"/>
</dbReference>
<dbReference type="PIR" id="H75198">
    <property type="entry name" value="H75198"/>
</dbReference>
<dbReference type="RefSeq" id="WP_048146488.1">
    <property type="nucleotide sequence ID" value="NC_000868.1"/>
</dbReference>
<dbReference type="SMR" id="Q9V2F9"/>
<dbReference type="STRING" id="272844.PAB0071"/>
<dbReference type="KEGG" id="pab:PAB0071"/>
<dbReference type="PATRIC" id="fig|272844.11.peg.128"/>
<dbReference type="eggNOG" id="arCOG04307">
    <property type="taxonomic scope" value="Archaea"/>
</dbReference>
<dbReference type="HOGENOM" id="CLU_044303_0_0_2"/>
<dbReference type="OrthoDB" id="84798at2157"/>
<dbReference type="Proteomes" id="UP000000810">
    <property type="component" value="Chromosome"/>
</dbReference>
<dbReference type="Proteomes" id="UP000009139">
    <property type="component" value="Chromosome"/>
</dbReference>
<dbReference type="GO" id="GO:0035925">
    <property type="term" value="F:mRNA 3'-UTR AU-rich region binding"/>
    <property type="evidence" value="ECO:0007669"/>
    <property type="project" value="UniProtKB-UniRule"/>
</dbReference>
<dbReference type="GO" id="GO:0016891">
    <property type="term" value="F:RNA endonuclease activity, producing 5'-phosphomonoesters"/>
    <property type="evidence" value="ECO:0007669"/>
    <property type="project" value="UniProtKB-UniRule"/>
</dbReference>
<dbReference type="GO" id="GO:0006364">
    <property type="term" value="P:rRNA processing"/>
    <property type="evidence" value="ECO:0007669"/>
    <property type="project" value="UniProtKB-UniRule"/>
</dbReference>
<dbReference type="Gene3D" id="2.40.380.10">
    <property type="entry name" value="FomD-like"/>
    <property type="match status" value="1"/>
</dbReference>
<dbReference type="HAMAP" id="MF_01910">
    <property type="entry name" value="RNA_binding_AU_1"/>
    <property type="match status" value="1"/>
</dbReference>
<dbReference type="InterPro" id="IPR007295">
    <property type="entry name" value="DUF402"/>
</dbReference>
<dbReference type="InterPro" id="IPR035930">
    <property type="entry name" value="FomD-like_sf"/>
</dbReference>
<dbReference type="InterPro" id="IPR050212">
    <property type="entry name" value="Ntdp-like"/>
</dbReference>
<dbReference type="InterPro" id="IPR019307">
    <property type="entry name" value="RNA-bd_AU-1/RNase_E/G"/>
</dbReference>
<dbReference type="InterPro" id="IPR016730">
    <property type="entry name" value="RNA-bd_FAU-1"/>
</dbReference>
<dbReference type="PANTHER" id="PTHR39159">
    <property type="match status" value="1"/>
</dbReference>
<dbReference type="PANTHER" id="PTHR39159:SF1">
    <property type="entry name" value="UPF0374 PROTEIN YGAC"/>
    <property type="match status" value="1"/>
</dbReference>
<dbReference type="Pfam" id="PF04167">
    <property type="entry name" value="DUF402"/>
    <property type="match status" value="1"/>
</dbReference>
<dbReference type="Pfam" id="PF10150">
    <property type="entry name" value="RNase_E_G"/>
    <property type="match status" value="1"/>
</dbReference>
<dbReference type="PIRSF" id="PIRSF018644">
    <property type="entry name" value="RNA-binding_FAU-1"/>
    <property type="match status" value="1"/>
</dbReference>
<dbReference type="SUPFAM" id="SSF159234">
    <property type="entry name" value="FomD-like"/>
    <property type="match status" value="1"/>
</dbReference>
<comment type="function">
    <text evidence="1">Probable RNase involved in rRNA stability through maturation and/or degradation of precursor rRNAs. Binds to RNA in loop regions with AU-rich sequences.</text>
</comment>
<comment type="similarity">
    <text evidence="1">Belongs to the FAU-1 family.</text>
</comment>
<comment type="sequence caution" evidence="2">
    <conflict type="erroneous initiation">
        <sequence resource="EMBL-CDS" id="CAB49039"/>
    </conflict>
</comment>
<keyword id="KW-0255">Endonuclease</keyword>
<keyword id="KW-0378">Hydrolase</keyword>
<keyword id="KW-0540">Nuclease</keyword>
<keyword id="KW-0694">RNA-binding</keyword>
<keyword id="KW-0698">rRNA processing</keyword>
<feature type="chain" id="PRO_0000334206" description="Probable ribonuclease FAU-1">
    <location>
        <begin position="1"/>
        <end position="469"/>
    </location>
</feature>
<evidence type="ECO:0000255" key="1">
    <source>
        <dbReference type="HAMAP-Rule" id="MF_01910"/>
    </source>
</evidence>
<evidence type="ECO:0000305" key="2"/>